<reference key="1">
    <citation type="journal article" date="2009" name="J. Bacteriol.">
        <title>Complete and draft genome sequences of six members of the Aquificales.</title>
        <authorList>
            <person name="Reysenbach A.-L."/>
            <person name="Hamamura N."/>
            <person name="Podar M."/>
            <person name="Griffiths E."/>
            <person name="Ferreira S."/>
            <person name="Hochstein R."/>
            <person name="Heidelberg J."/>
            <person name="Johnson J."/>
            <person name="Mead D."/>
            <person name="Pohorille A."/>
            <person name="Sarmiento M."/>
            <person name="Schweighofer K."/>
            <person name="Seshadri R."/>
            <person name="Voytek M.A."/>
        </authorList>
    </citation>
    <scope>NUCLEOTIDE SEQUENCE [LARGE SCALE GENOMIC DNA]</scope>
    <source>
        <strain>YO3AOP1</strain>
    </source>
</reference>
<organism>
    <name type="scientific">Sulfurihydrogenibium sp. (strain YO3AOP1)</name>
    <dbReference type="NCBI Taxonomy" id="436114"/>
    <lineage>
        <taxon>Bacteria</taxon>
        <taxon>Pseudomonadati</taxon>
        <taxon>Aquificota</taxon>
        <taxon>Aquificia</taxon>
        <taxon>Aquificales</taxon>
        <taxon>Hydrogenothermaceae</taxon>
        <taxon>Sulfurihydrogenibium</taxon>
    </lineage>
</organism>
<accession>B2V9H0</accession>
<evidence type="ECO:0000255" key="1">
    <source>
        <dbReference type="HAMAP-Rule" id="MF_01396"/>
    </source>
</evidence>
<comment type="function">
    <text evidence="1">F(1)F(0) ATP synthase produces ATP from ADP in the presence of a proton or sodium gradient. F-type ATPases consist of two structural domains, F(1) containing the extramembraneous catalytic core and F(0) containing the membrane proton channel, linked together by a central stalk and a peripheral stalk. During catalysis, ATP synthesis in the catalytic domain of F(1) is coupled via a rotary mechanism of the central stalk subunits to proton translocation.</text>
</comment>
<comment type="function">
    <text evidence="1">Key component of the F(0) channel; it plays a direct role in translocation across the membrane. A homomeric c-ring of between 10-14 subunits forms the central stalk rotor element with the F(1) delta and epsilon subunits.</text>
</comment>
<comment type="subunit">
    <text evidence="1">F-type ATPases have 2 components, F(1) - the catalytic core - and F(0) - the membrane proton channel. F(1) has five subunits: alpha(3), beta(3), gamma(1), delta(1), epsilon(1). F(0) has three main subunits: a(1), b(2) and c(10-14). The alpha and beta chains form an alternating ring which encloses part of the gamma chain. F(1) is attached to F(0) by a central stalk formed by the gamma and epsilon chains, while a peripheral stalk is formed by the delta and b chains.</text>
</comment>
<comment type="subcellular location">
    <subcellularLocation>
        <location evidence="1">Cell inner membrane</location>
        <topology evidence="1">Multi-pass membrane protein</topology>
    </subcellularLocation>
</comment>
<comment type="similarity">
    <text evidence="1">Belongs to the ATPase C chain family.</text>
</comment>
<keyword id="KW-0066">ATP synthesis</keyword>
<keyword id="KW-0997">Cell inner membrane</keyword>
<keyword id="KW-1003">Cell membrane</keyword>
<keyword id="KW-0138">CF(0)</keyword>
<keyword id="KW-0375">Hydrogen ion transport</keyword>
<keyword id="KW-0406">Ion transport</keyword>
<keyword id="KW-0446">Lipid-binding</keyword>
<keyword id="KW-0472">Membrane</keyword>
<keyword id="KW-0812">Transmembrane</keyword>
<keyword id="KW-1133">Transmembrane helix</keyword>
<keyword id="KW-0813">Transport</keyword>
<feature type="chain" id="PRO_5000370880" description="ATP synthase subunit c">
    <location>
        <begin position="1"/>
        <end position="114"/>
    </location>
</feature>
<feature type="transmembrane region" description="Helical" evidence="1">
    <location>
        <begin position="31"/>
        <end position="51"/>
    </location>
</feature>
<feature type="transmembrane region" description="Helical" evidence="1">
    <location>
        <begin position="88"/>
        <end position="108"/>
    </location>
</feature>
<feature type="site" description="Reversibly protonated during proton transport" evidence="1">
    <location>
        <position position="89"/>
    </location>
</feature>
<proteinExistence type="inferred from homology"/>
<protein>
    <recommendedName>
        <fullName evidence="1">ATP synthase subunit c</fullName>
    </recommendedName>
    <alternativeName>
        <fullName evidence="1">ATP synthase F(0) sector subunit c</fullName>
    </alternativeName>
    <alternativeName>
        <fullName evidence="1">F-type ATPase subunit c</fullName>
        <shortName evidence="1">F-ATPase subunit c</shortName>
    </alternativeName>
    <alternativeName>
        <fullName evidence="1">Lipid-binding protein</fullName>
    </alternativeName>
</protein>
<dbReference type="EMBL" id="CP001080">
    <property type="protein sequence ID" value="ACD66593.1"/>
    <property type="molecule type" value="Genomic_DNA"/>
</dbReference>
<dbReference type="RefSeq" id="WP_012459663.1">
    <property type="nucleotide sequence ID" value="NC_010730.1"/>
</dbReference>
<dbReference type="SMR" id="B2V9H0"/>
<dbReference type="STRING" id="436114.SYO3AOP1_0972"/>
<dbReference type="KEGG" id="sul:SYO3AOP1_0972"/>
<dbReference type="eggNOG" id="COG0636">
    <property type="taxonomic scope" value="Bacteria"/>
</dbReference>
<dbReference type="HOGENOM" id="CLU_148047_0_0_0"/>
<dbReference type="GO" id="GO:0005886">
    <property type="term" value="C:plasma membrane"/>
    <property type="evidence" value="ECO:0007669"/>
    <property type="project" value="UniProtKB-SubCell"/>
</dbReference>
<dbReference type="GO" id="GO:0045259">
    <property type="term" value="C:proton-transporting ATP synthase complex"/>
    <property type="evidence" value="ECO:0007669"/>
    <property type="project" value="UniProtKB-KW"/>
</dbReference>
<dbReference type="GO" id="GO:0033177">
    <property type="term" value="C:proton-transporting two-sector ATPase complex, proton-transporting domain"/>
    <property type="evidence" value="ECO:0007669"/>
    <property type="project" value="InterPro"/>
</dbReference>
<dbReference type="GO" id="GO:0008289">
    <property type="term" value="F:lipid binding"/>
    <property type="evidence" value="ECO:0007669"/>
    <property type="project" value="UniProtKB-KW"/>
</dbReference>
<dbReference type="GO" id="GO:0046933">
    <property type="term" value="F:proton-transporting ATP synthase activity, rotational mechanism"/>
    <property type="evidence" value="ECO:0007669"/>
    <property type="project" value="UniProtKB-UniRule"/>
</dbReference>
<dbReference type="CDD" id="cd18121">
    <property type="entry name" value="ATP-synt_Fo_c"/>
    <property type="match status" value="1"/>
</dbReference>
<dbReference type="FunFam" id="1.20.20.10:FF:000002">
    <property type="entry name" value="ATP synthase subunit c"/>
    <property type="match status" value="1"/>
</dbReference>
<dbReference type="Gene3D" id="1.20.20.10">
    <property type="entry name" value="F1F0 ATP synthase subunit C"/>
    <property type="match status" value="1"/>
</dbReference>
<dbReference type="HAMAP" id="MF_01396">
    <property type="entry name" value="ATP_synth_c_bact"/>
    <property type="match status" value="1"/>
</dbReference>
<dbReference type="InterPro" id="IPR005953">
    <property type="entry name" value="ATP_synth_csu_bac/chlpt"/>
</dbReference>
<dbReference type="InterPro" id="IPR000454">
    <property type="entry name" value="ATP_synth_F0_csu"/>
</dbReference>
<dbReference type="InterPro" id="IPR020537">
    <property type="entry name" value="ATP_synth_F0_csu_DDCD_BS"/>
</dbReference>
<dbReference type="InterPro" id="IPR038662">
    <property type="entry name" value="ATP_synth_F0_csu_sf"/>
</dbReference>
<dbReference type="InterPro" id="IPR002379">
    <property type="entry name" value="ATPase_proteolipid_c-like_dom"/>
</dbReference>
<dbReference type="InterPro" id="IPR035921">
    <property type="entry name" value="F/V-ATP_Csub_sf"/>
</dbReference>
<dbReference type="NCBIfam" id="TIGR01260">
    <property type="entry name" value="ATP_synt_c"/>
    <property type="match status" value="1"/>
</dbReference>
<dbReference type="Pfam" id="PF00137">
    <property type="entry name" value="ATP-synt_C"/>
    <property type="match status" value="1"/>
</dbReference>
<dbReference type="PRINTS" id="PR00124">
    <property type="entry name" value="ATPASEC"/>
</dbReference>
<dbReference type="SUPFAM" id="SSF81333">
    <property type="entry name" value="F1F0 ATP synthase subunit C"/>
    <property type="match status" value="1"/>
</dbReference>
<dbReference type="PROSITE" id="PS00605">
    <property type="entry name" value="ATPASE_C"/>
    <property type="match status" value="1"/>
</dbReference>
<sequence>MVKFSKVLMLMVLAGTVSAAFAAEGDPMARAVFYGALAIGAGVAIGAAAGGGAAGLGNAIRGVLEGMARNPNMGPKLLTTMFIGMALIETFVLYALLIAIIFIFTGIFDSKAGF</sequence>
<gene>
    <name evidence="1" type="primary">atpE</name>
    <name type="ordered locus">SYO3AOP1_0972</name>
</gene>
<name>ATPL_SULSY</name>